<accession>C3LAM8</accession>
<keyword id="KW-0032">Aminotransferase</keyword>
<keyword id="KW-0663">Pyridoxal phosphate</keyword>
<keyword id="KW-0670">Pyruvate</keyword>
<keyword id="KW-0808">Transferase</keyword>
<comment type="function">
    <text evidence="1">Involved in phosphonate degradation.</text>
</comment>
<comment type="catalytic activity">
    <reaction evidence="1">
        <text>(2-aminoethyl)phosphonate + pyruvate = phosphonoacetaldehyde + L-alanine</text>
        <dbReference type="Rhea" id="RHEA:17021"/>
        <dbReference type="ChEBI" id="CHEBI:15361"/>
        <dbReference type="ChEBI" id="CHEBI:57418"/>
        <dbReference type="ChEBI" id="CHEBI:57972"/>
        <dbReference type="ChEBI" id="CHEBI:58383"/>
        <dbReference type="EC" id="2.6.1.37"/>
    </reaction>
</comment>
<comment type="cofactor">
    <cofactor evidence="1">
        <name>pyridoxal 5'-phosphate</name>
        <dbReference type="ChEBI" id="CHEBI:597326"/>
    </cofactor>
</comment>
<comment type="subunit">
    <text evidence="1">Homodimer.</text>
</comment>
<comment type="similarity">
    <text evidence="1">Belongs to the class-V pyridoxal-phosphate-dependent aminotransferase family. PhnW subfamily.</text>
</comment>
<evidence type="ECO:0000255" key="1">
    <source>
        <dbReference type="HAMAP-Rule" id="MF_01376"/>
    </source>
</evidence>
<name>PHNW_BACAC</name>
<proteinExistence type="inferred from homology"/>
<sequence length="365" mass="41298">MTENHYLLLTPGPLTTTKTVKEVMLYDWCTWDVEYNTMVQKVRAKLVSLATKEEEKYTTVLMQGSGTFSVEAVIGSVIPKNGKLLVCTNGAYGKRIVQMAEMLHIDVVVSQTEEWEPTNIVEVEKILQQDKEITHIAVVHCETTTGIINPIVDVCKLGKQYGKVTLVDAMSSFGGIEIDIAELQIDFLISSANKCIQGVPGFGFVIAQRDELLKCKGQARSLSLDLYDQWETMENQNGKWRFTSPTHVVHAFYQALLELEKEGGVRARYNRYYNNQKLLVNRMGEIGFKPLVNEKYQSPIITSFIYPEGNFEFQQLYNELKRYGFVIYPGKISKVDTFRIGNIGDVHEEDINRLVDSIAKGVVIG</sequence>
<gene>
    <name evidence="1" type="primary">phnW</name>
    <name type="ordered locus">BAMEG_3255</name>
</gene>
<dbReference type="EC" id="2.6.1.37" evidence="1"/>
<dbReference type="EMBL" id="CP001215">
    <property type="protein sequence ID" value="ACP14929.1"/>
    <property type="molecule type" value="Genomic_DNA"/>
</dbReference>
<dbReference type="RefSeq" id="WP_000138251.1">
    <property type="nucleotide sequence ID" value="NC_012581.1"/>
</dbReference>
<dbReference type="SMR" id="C3LAM8"/>
<dbReference type="GeneID" id="45021330"/>
<dbReference type="KEGG" id="bah:BAMEG_3255"/>
<dbReference type="HOGENOM" id="CLU_027686_3_1_9"/>
<dbReference type="GO" id="GO:0047304">
    <property type="term" value="F:2-aminoethylphosphonate-pyruvate transaminase activity"/>
    <property type="evidence" value="ECO:0007669"/>
    <property type="project" value="UniProtKB-UniRule"/>
</dbReference>
<dbReference type="GO" id="GO:0019700">
    <property type="term" value="P:organic phosphonate catabolic process"/>
    <property type="evidence" value="ECO:0007669"/>
    <property type="project" value="InterPro"/>
</dbReference>
<dbReference type="Gene3D" id="3.90.1150.10">
    <property type="entry name" value="Aspartate Aminotransferase, domain 1"/>
    <property type="match status" value="1"/>
</dbReference>
<dbReference type="Gene3D" id="3.40.640.10">
    <property type="entry name" value="Type I PLP-dependent aspartate aminotransferase-like (Major domain)"/>
    <property type="match status" value="1"/>
</dbReference>
<dbReference type="HAMAP" id="MF_01376">
    <property type="entry name" value="PhnW_aminotrans_5"/>
    <property type="match status" value="1"/>
</dbReference>
<dbReference type="InterPro" id="IPR000192">
    <property type="entry name" value="Aminotrans_V_dom"/>
</dbReference>
<dbReference type="InterPro" id="IPR012703">
    <property type="entry name" value="NH2EtPonate_pyrv_transaminase"/>
</dbReference>
<dbReference type="InterPro" id="IPR015424">
    <property type="entry name" value="PyrdxlP-dep_Trfase"/>
</dbReference>
<dbReference type="InterPro" id="IPR015421">
    <property type="entry name" value="PyrdxlP-dep_Trfase_major"/>
</dbReference>
<dbReference type="InterPro" id="IPR015422">
    <property type="entry name" value="PyrdxlP-dep_Trfase_small"/>
</dbReference>
<dbReference type="InterPro" id="IPR024169">
    <property type="entry name" value="SP_NH2Trfase/AEP_transaminase"/>
</dbReference>
<dbReference type="NCBIfam" id="TIGR03301">
    <property type="entry name" value="PhnW-AepZ"/>
    <property type="match status" value="1"/>
</dbReference>
<dbReference type="NCBIfam" id="NF010006">
    <property type="entry name" value="PRK13479.1"/>
    <property type="match status" value="1"/>
</dbReference>
<dbReference type="NCBIfam" id="TIGR02326">
    <property type="entry name" value="transamin_PhnW"/>
    <property type="match status" value="1"/>
</dbReference>
<dbReference type="PANTHER" id="PTHR42778">
    <property type="entry name" value="2-AMINOETHYLPHOSPHONATE--PYRUVATE TRANSAMINASE"/>
    <property type="match status" value="1"/>
</dbReference>
<dbReference type="PANTHER" id="PTHR42778:SF1">
    <property type="entry name" value="2-AMINOETHYLPHOSPHONATE--PYRUVATE TRANSAMINASE"/>
    <property type="match status" value="1"/>
</dbReference>
<dbReference type="Pfam" id="PF00266">
    <property type="entry name" value="Aminotran_5"/>
    <property type="match status" value="1"/>
</dbReference>
<dbReference type="PIRSF" id="PIRSF000524">
    <property type="entry name" value="SPT"/>
    <property type="match status" value="1"/>
</dbReference>
<dbReference type="SUPFAM" id="SSF53383">
    <property type="entry name" value="PLP-dependent transferases"/>
    <property type="match status" value="1"/>
</dbReference>
<protein>
    <recommendedName>
        <fullName evidence="1">2-aminoethylphosphonate--pyruvate transaminase</fullName>
        <ecNumber evidence="1">2.6.1.37</ecNumber>
    </recommendedName>
    <alternativeName>
        <fullName evidence="1">2-aminoethylphosphonate aminotransferase</fullName>
    </alternativeName>
    <alternativeName>
        <fullName evidence="1">AEP transaminase</fullName>
        <shortName evidence="1">AEPT</shortName>
    </alternativeName>
</protein>
<reference key="1">
    <citation type="submission" date="2008-10" db="EMBL/GenBank/DDBJ databases">
        <title>Genome sequence of Bacillus anthracis str. CDC 684.</title>
        <authorList>
            <person name="Dodson R.J."/>
            <person name="Munk A.C."/>
            <person name="Brettin T."/>
            <person name="Bruce D."/>
            <person name="Detter C."/>
            <person name="Tapia R."/>
            <person name="Han C."/>
            <person name="Sutton G."/>
            <person name="Sims D."/>
        </authorList>
    </citation>
    <scope>NUCLEOTIDE SEQUENCE [LARGE SCALE GENOMIC DNA]</scope>
    <source>
        <strain>CDC 684 / NRRL 3495</strain>
    </source>
</reference>
<feature type="chain" id="PRO_1000184191" description="2-aminoethylphosphonate--pyruvate transaminase">
    <location>
        <begin position="1"/>
        <end position="365"/>
    </location>
</feature>
<feature type="modified residue" description="N6-(pyridoxal phosphate)lysine" evidence="1">
    <location>
        <position position="194"/>
    </location>
</feature>
<organism>
    <name type="scientific">Bacillus anthracis (strain CDC 684 / NRRL 3495)</name>
    <dbReference type="NCBI Taxonomy" id="568206"/>
    <lineage>
        <taxon>Bacteria</taxon>
        <taxon>Bacillati</taxon>
        <taxon>Bacillota</taxon>
        <taxon>Bacilli</taxon>
        <taxon>Bacillales</taxon>
        <taxon>Bacillaceae</taxon>
        <taxon>Bacillus</taxon>
        <taxon>Bacillus cereus group</taxon>
    </lineage>
</organism>